<accession>Q8JMY6</accession>
<evidence type="ECO:0000250" key="1">
    <source>
        <dbReference type="UniProtKB" id="P03138"/>
    </source>
</evidence>
<evidence type="ECO:0000250" key="2">
    <source>
        <dbReference type="UniProtKB" id="P03141"/>
    </source>
</evidence>
<evidence type="ECO:0000255" key="3">
    <source>
        <dbReference type="HAMAP-Rule" id="MF_04075"/>
    </source>
</evidence>
<evidence type="ECO:0000256" key="4">
    <source>
        <dbReference type="SAM" id="MobiDB-lite"/>
    </source>
</evidence>
<evidence type="ECO:0000305" key="5"/>
<organism>
    <name type="scientific">Hepatitis B virus genotype H (isolate United States/LAS2523/2002)</name>
    <name type="common">HBV-H</name>
    <dbReference type="NCBI Taxonomy" id="489539"/>
    <lineage>
        <taxon>Viruses</taxon>
        <taxon>Riboviria</taxon>
        <taxon>Pararnavirae</taxon>
        <taxon>Artverviricota</taxon>
        <taxon>Revtraviricetes</taxon>
        <taxon>Blubervirales</taxon>
        <taxon>Hepadnaviridae</taxon>
        <taxon>Orthohepadnavirus</taxon>
        <taxon>Hepatitis B virus</taxon>
        <taxon>hepatitis B virus genotype H</taxon>
    </lineage>
</organism>
<dbReference type="EMBL" id="AY090460">
    <property type="protein sequence ID" value="AAM09064.1"/>
    <property type="molecule type" value="Genomic_DNA"/>
</dbReference>
<dbReference type="PIR" id="JQ2119">
    <property type="entry name" value="JQ2119"/>
</dbReference>
<dbReference type="PIR" id="JQ2120">
    <property type="entry name" value="JQ2120"/>
</dbReference>
<dbReference type="PIR" id="JQ2121">
    <property type="entry name" value="JQ2121"/>
</dbReference>
<dbReference type="PIR" id="JQ2122">
    <property type="entry name" value="JQ2122"/>
</dbReference>
<dbReference type="SMR" id="Q8JMY6"/>
<dbReference type="GlyCosmos" id="Q8JMY6">
    <property type="glycosylation" value="2 sites, No reported glycans"/>
</dbReference>
<dbReference type="Proteomes" id="UP000001181">
    <property type="component" value="Segment"/>
</dbReference>
<dbReference type="GO" id="GO:0016020">
    <property type="term" value="C:membrane"/>
    <property type="evidence" value="ECO:0007669"/>
    <property type="project" value="UniProtKB-UniRule"/>
</dbReference>
<dbReference type="GO" id="GO:0019031">
    <property type="term" value="C:viral envelope"/>
    <property type="evidence" value="ECO:0007669"/>
    <property type="project" value="UniProtKB-KW"/>
</dbReference>
<dbReference type="GO" id="GO:0055036">
    <property type="term" value="C:virion membrane"/>
    <property type="evidence" value="ECO:0007669"/>
    <property type="project" value="UniProtKB-SubCell"/>
</dbReference>
<dbReference type="GO" id="GO:0075513">
    <property type="term" value="P:caveolin-mediated endocytosis of virus by host cell"/>
    <property type="evidence" value="ECO:0007669"/>
    <property type="project" value="UniProtKB-KW"/>
</dbReference>
<dbReference type="GO" id="GO:0039654">
    <property type="term" value="P:fusion of virus membrane with host endosome membrane"/>
    <property type="evidence" value="ECO:0007669"/>
    <property type="project" value="UniProtKB-KW"/>
</dbReference>
<dbReference type="GO" id="GO:0019062">
    <property type="term" value="P:virion attachment to host cell"/>
    <property type="evidence" value="ECO:0007669"/>
    <property type="project" value="UniProtKB-UniRule"/>
</dbReference>
<dbReference type="HAMAP" id="MF_04075">
    <property type="entry name" value="HBV_HBSAG"/>
    <property type="match status" value="1"/>
</dbReference>
<dbReference type="InterPro" id="IPR000349">
    <property type="entry name" value="HBV_HBSAG"/>
</dbReference>
<dbReference type="Pfam" id="PF00695">
    <property type="entry name" value="vMSA"/>
    <property type="match status" value="1"/>
</dbReference>
<organismHost>
    <name type="scientific">Homo sapiens</name>
    <name type="common">Human</name>
    <dbReference type="NCBI Taxonomy" id="9606"/>
</organismHost>
<organismHost>
    <name type="scientific">Pan troglodytes</name>
    <name type="common">Chimpanzee</name>
    <dbReference type="NCBI Taxonomy" id="9598"/>
</organismHost>
<keyword id="KW-0007">Acetylation</keyword>
<keyword id="KW-0024">Alternative initiation</keyword>
<keyword id="KW-0025">Alternative splicing</keyword>
<keyword id="KW-1166">Caveolin-mediated endocytosis of virus by host</keyword>
<keyword id="KW-1170">Fusion of virus membrane with host endosomal membrane</keyword>
<keyword id="KW-1168">Fusion of virus membrane with host membrane</keyword>
<keyword id="KW-0325">Glycoprotein</keyword>
<keyword id="KW-0945">Host-virus interaction</keyword>
<keyword id="KW-0449">Lipoprotein</keyword>
<keyword id="KW-0472">Membrane</keyword>
<keyword id="KW-0519">Myristate</keyword>
<keyword id="KW-0812">Transmembrane</keyword>
<keyword id="KW-1133">Transmembrane helix</keyword>
<keyword id="KW-1161">Viral attachment to host cell</keyword>
<keyword id="KW-0261">Viral envelope protein</keyword>
<keyword id="KW-1162">Viral penetration into host cytoplasm</keyword>
<keyword id="KW-0946">Virion</keyword>
<keyword id="KW-1164">Virus endocytosis by host</keyword>
<keyword id="KW-1160">Virus entry into host cell</keyword>
<reference key="1">
    <citation type="journal article" date="2002" name="J. Gen. Virol.">
        <title>Genotype H: a new Amerindian genotype of hepatitis B virus revealed in Central America.</title>
        <authorList>
            <person name="Arauz-Ruiz P."/>
            <person name="Norder H."/>
            <person name="Robertson B.H."/>
            <person name="Magnius L.O."/>
        </authorList>
    </citation>
    <scope>NUCLEOTIDE SEQUENCE [GENOMIC DNA]</scope>
</reference>
<reference key="2">
    <citation type="journal article" date="1996" name="Intervirology">
        <title>Functions of the large hepatitis B virus surface protein in viral particle morphogenesis.</title>
        <authorList>
            <person name="Bruss V."/>
            <person name="Gerhardt E."/>
            <person name="Vieluf K."/>
            <person name="Wunderlich G."/>
        </authorList>
    </citation>
    <scope>REVIEW</scope>
</reference>
<reference key="3">
    <citation type="journal article" date="1998" name="Adv. Exp. Med. Biol.">
        <title>Role of glycan processing in hepatitis B virus envelope protein trafficking.</title>
        <authorList>
            <person name="Block T.M."/>
            <person name="Lu X."/>
            <person name="Mehta A."/>
            <person name="Park J."/>
            <person name="Blumberg B.S."/>
            <person name="Dwek R."/>
        </authorList>
    </citation>
    <scope>REVIEW</scope>
</reference>
<reference key="4">
    <citation type="journal article" date="2004" name="Virus Res.">
        <title>Envelopment of the hepatitis B virus nucleocapsid.</title>
        <authorList>
            <person name="Bruss V."/>
        </authorList>
    </citation>
    <scope>REVIEW</scope>
</reference>
<reference key="5">
    <citation type="journal article" date="2006" name="Cancer Sci.">
        <title>Hepatitis B virus pre-S mutants, endoplasmic reticulum stress and hepatocarcinogenesis.</title>
        <authorList>
            <person name="Wang H.C."/>
            <person name="Huang W."/>
            <person name="Lai M.D."/>
            <person name="Su I.J."/>
        </authorList>
    </citation>
    <scope>REVIEW</scope>
</reference>
<name>HBSAG_HBVH1</name>
<feature type="initiator methionine" description="Removed; by host" evidence="3">
    <location>
        <position position="1"/>
    </location>
</feature>
<feature type="chain" id="PRO_0000319096" description="Large envelope protein" evidence="3">
    <location>
        <begin position="2"/>
        <end position="400"/>
    </location>
</feature>
<feature type="topological domain" description="Intravirion; in internal conformation" evidence="3">
    <location>
        <begin position="2"/>
        <end position="253"/>
    </location>
</feature>
<feature type="topological domain" description="Virion surface; in external conformation" evidence="3">
    <location>
        <begin position="2"/>
        <end position="181"/>
    </location>
</feature>
<feature type="transmembrane region" description="Helical; Name=TM1; Note=In external conformation" evidence="3">
    <location>
        <begin position="182"/>
        <end position="202"/>
    </location>
</feature>
<feature type="topological domain" description="Intravirion; in external conformation" evidence="3">
    <location>
        <begin position="203"/>
        <end position="253"/>
    </location>
</feature>
<feature type="transmembrane region" description="Helical; Name=TM2" evidence="3">
    <location>
        <begin position="254"/>
        <end position="274"/>
    </location>
</feature>
<feature type="topological domain" description="Virion surface" evidence="3">
    <location>
        <begin position="275"/>
        <end position="348"/>
    </location>
</feature>
<feature type="transmembrane region" description="Helical" evidence="3">
    <location>
        <begin position="349"/>
        <end position="369"/>
    </location>
</feature>
<feature type="topological domain" description="Intravirion" evidence="3">
    <location>
        <begin position="370"/>
        <end position="375"/>
    </location>
</feature>
<feature type="transmembrane region" description="Helical; Name=TM3" evidence="3">
    <location>
        <begin position="376"/>
        <end position="398"/>
    </location>
</feature>
<feature type="topological domain" description="Virion surface" evidence="3">
    <location>
        <begin position="399"/>
        <end position="400"/>
    </location>
</feature>
<feature type="region of interest" description="Pre-S" evidence="3">
    <location>
        <begin position="2"/>
        <end position="174"/>
    </location>
</feature>
<feature type="region of interest" description="Pre-S1" evidence="3">
    <location>
        <begin position="2"/>
        <end position="119"/>
    </location>
</feature>
<feature type="region of interest" description="Disordered" evidence="4">
    <location>
        <begin position="70"/>
        <end position="115"/>
    </location>
</feature>
<feature type="region of interest" description="Pre-S2" evidence="3">
    <location>
        <begin position="120"/>
        <end position="174"/>
    </location>
</feature>
<feature type="compositionally biased region" description="Polar residues" evidence="4">
    <location>
        <begin position="79"/>
        <end position="88"/>
    </location>
</feature>
<feature type="lipid moiety-binding region" description="N-myristoyl glycine; by host" evidence="3">
    <location>
        <position position="2"/>
    </location>
</feature>
<feature type="glycosylation site" description="N-linked (GlcNAc...) asparagine; by host" evidence="3">
    <location>
        <position position="320"/>
    </location>
</feature>
<feature type="splice variant" id="VSP_031429" description="In isoform S." evidence="5">
    <location>
        <begin position="1"/>
        <end position="174"/>
    </location>
</feature>
<feature type="splice variant" id="VSP_031430" description="In isoform M." evidence="5">
    <location>
        <begin position="1"/>
        <end position="119"/>
    </location>
</feature>
<feature type="modified residue" description="N-acetylmethionine" evidence="5">
    <location sequence="Q8JMY6-2">
        <position position="1"/>
    </location>
</feature>
<feature type="glycosylation site" description="N-linked (GlcNAc...) asparagine" evidence="5">
    <location sequence="Q8JMY6-2">
        <position position="4"/>
    </location>
</feature>
<proteinExistence type="evidence at protein level"/>
<sequence>MGAPLSTARRGMGQNLSVPNPLGFFPDHQLDPLFRANSSSPDWDFNTNKDNWPMANKVGVGGFGPGFTPPHGGLLGWSPQAQGILTTSPPDPPPASTNRRSGRKPTPVSPPLRDTHPQAMQWNSTQFHQALLDPRVRGLYFPAGGSSSETQNPAPTIASLTSSIFSKTGDPAMNMENITSGLLRPLLVLQAVCFLLTKILTIPQSLDSWWTSLNFLGVPPGCPGQNSQSPISNHLPTSCPPTCPGYRWMCLRRFIIFLFILLLCLIFLLVLLDYQGMLPVCPLLPGSTTTSTGPCKTCTTLAQGTSMFPSCCCTKPSDGNCTCIPIPSSWAFGKYLWEWASARFSWLSLLVQFVQWCVGLSPTVWLLVIWMIWYWGPNLCSILSPFIPLLPIFCYLWASI</sequence>
<protein>
    <recommendedName>
        <fullName evidence="3">Large envelope protein</fullName>
    </recommendedName>
    <alternativeName>
        <fullName evidence="3">L glycoprotein</fullName>
    </alternativeName>
    <alternativeName>
        <fullName evidence="3">L-HBsAg</fullName>
        <shortName evidence="3">LHB</shortName>
    </alternativeName>
    <alternativeName>
        <fullName evidence="3">Large S protein</fullName>
    </alternativeName>
    <alternativeName>
        <fullName evidence="3">Large surface protein</fullName>
    </alternativeName>
    <alternativeName>
        <fullName evidence="3">Major surface antigen</fullName>
    </alternativeName>
</protein>
<comment type="function">
    <text evidence="3">The large envelope protein exists in two topological conformations, one which is termed 'external' or Le-HBsAg and the other 'internal' or Li-HBsAg. In its external conformation the protein attaches the virus to cell receptors and thereby initiating infection. This interaction determines the species specificity and liver tropism. This attachment induces virion internalization predominantly through caveolin-mediated endocytosis. The large envelope protein also assures fusion between virion membrane and endosomal membrane. In its internal conformation the protein plays a role in virion morphogenesis and mediates the contact with the nucleocapsid like a matrix protein.</text>
</comment>
<comment type="function">
    <text evidence="3">The middle envelope protein plays an important role in the budding of the virion. It is involved in the induction of budding in a nucleocapsid independent way. In this process the majority of envelope proteins bud to form subviral lipoprotein particles of 22 nm of diameter that do not contain a nucleocapsid.</text>
</comment>
<comment type="subunit">
    <molecule>Isoform L</molecule>
    <text evidence="2">In its internal form (Li-HBsAg), interacts with the capsid protein and with the isoform S. Interacts with host chaperone CANX.</text>
</comment>
<comment type="subunit">
    <molecule>Isoform M</molecule>
    <text evidence="2">Associates with host chaperone CANX through its pre-S2 N glycan; this association may be essential for isoform M proper secretion.</text>
</comment>
<comment type="subunit">
    <molecule>Isoform S</molecule>
    <text evidence="2">Interacts with isoform L. Interacts with the antigens of satellite virus HDV (HDVAgs); this interaction is required for encapsidation of HDV genomic RNA.</text>
</comment>
<comment type="subcellular location">
    <subcellularLocation>
        <location evidence="3">Virion membrane</location>
    </subcellularLocation>
</comment>
<comment type="alternative products">
    <event type="alternative splicing"/>
    <event type="alternative initiation"/>
    <isoform>
        <id>Q8JMY6-1</id>
        <name>L</name>
        <name>Large envelope protein</name>
        <name>LHB</name>
        <name>L-HBsAg</name>
        <sequence type="displayed"/>
    </isoform>
    <isoform>
        <id>Q8JMY6-2</id>
        <name>M</name>
        <name>Middle envelope protein</name>
        <name>MHB</name>
        <name>M-HBsAg</name>
        <sequence type="described" ref="VSP_031430"/>
    </isoform>
    <isoform>
        <id>Q8JMY6-3</id>
        <name>S</name>
        <name>Small envelope protein</name>
        <name>SHB</name>
        <name>S-HBsAg</name>
        <sequence type="described" ref="VSP_031429"/>
    </isoform>
</comment>
<comment type="domain">
    <text evidence="3">The large envelope protein is synthesized with the pre-S region at the cytosolic side of the endoplasmic reticulum and, hence will be within the virion after budding. Therefore the pre-S region is not N-glycosylated. Later a post-translational translocation of N-terminal pre-S and TM1 domains occur in about 50% of proteins at the virion surface. These molecules change their topology by an unknown mechanism, resulting in exposure of pre-S region at virion surface. For isoform M in contrast, the pre-S2 region is translocated cotranslationally to the endoplasmic reticulum lumen and is N-glycosylated.</text>
</comment>
<comment type="PTM">
    <text evidence="1 3">Isoform M is N-terminally acetylated by host at a ratio of 90%, and N-glycosylated by host at the pre-S2 region.</text>
</comment>
<comment type="PTM">
    <text evidence="3">Myristoylated.</text>
</comment>
<comment type="biotechnology">
    <text>Systematic vaccination of individuals at risk of exposure to the virus has been the main method of controlling the morbidity and mortality associated with hepatitis B. The first hepatitis B vaccine was manufactured by the purification and inactivation of HBsAg obtained from the plasma of chronic hepatitis B virus carriers. The vaccine is now produced by recombinant DNA techniques and expression of the S isoform in yeast cells. The pre-S region do not seem to induce strong enough antigenic response.</text>
</comment>
<comment type="similarity">
    <text evidence="3">Belongs to the orthohepadnavirus major surface antigen family.</text>
</comment>
<gene>
    <name evidence="3" type="primary">S</name>
</gene>